<protein>
    <recommendedName>
        <fullName>Killer cell immunoglobulin-like receptor 3DL1</fullName>
    </recommendedName>
    <cdAntigenName>CD158e</cdAntigenName>
</protein>
<dbReference type="EMBL" id="AF527797">
    <property type="protein sequence ID" value="AAO47865.1"/>
    <property type="molecule type" value="mRNA"/>
</dbReference>
<dbReference type="RefSeq" id="NP_852144.1">
    <property type="nucleotide sequence ID" value="NM_181479.2"/>
</dbReference>
<dbReference type="SMR" id="P83556"/>
<dbReference type="FunCoup" id="P83556">
    <property type="interactions" value="172"/>
</dbReference>
<dbReference type="STRING" id="10116.ENSRNOP00000031521"/>
<dbReference type="GlyCosmos" id="P83556">
    <property type="glycosylation" value="5 sites, No reported glycans"/>
</dbReference>
<dbReference type="GlyGen" id="P83556">
    <property type="glycosylation" value="5 sites"/>
</dbReference>
<dbReference type="PhosphoSitePlus" id="P83556"/>
<dbReference type="PaxDb" id="10116-ENSRNOP00000031521"/>
<dbReference type="Ensembl" id="ENSRNOT00000039823.4">
    <property type="protein sequence ID" value="ENSRNOP00000031521.3"/>
    <property type="gene ID" value="ENSRNOG00000027843.5"/>
</dbReference>
<dbReference type="GeneID" id="353253"/>
<dbReference type="KEGG" id="rno:353253"/>
<dbReference type="UCSC" id="RGD:727836">
    <property type="organism name" value="rat"/>
</dbReference>
<dbReference type="AGR" id="RGD:727836"/>
<dbReference type="CTD" id="3811"/>
<dbReference type="RGD" id="727836">
    <property type="gene designation" value="Kir3dl1"/>
</dbReference>
<dbReference type="eggNOG" id="ENOG502RU21">
    <property type="taxonomic scope" value="Eukaryota"/>
</dbReference>
<dbReference type="GeneTree" id="ENSGT01100000263478"/>
<dbReference type="HOGENOM" id="CLU_021100_2_1_1"/>
<dbReference type="InParanoid" id="P83556"/>
<dbReference type="OMA" id="YEELNIN"/>
<dbReference type="OrthoDB" id="9613897at2759"/>
<dbReference type="PhylomeDB" id="P83556"/>
<dbReference type="TreeFam" id="TF352669"/>
<dbReference type="Reactome" id="R-RNO-198933">
    <property type="pathway name" value="Immunoregulatory interactions between a Lymphoid and a non-Lymphoid cell"/>
</dbReference>
<dbReference type="Reactome" id="R-RNO-2172127">
    <property type="pathway name" value="DAP12 interactions"/>
</dbReference>
<dbReference type="PRO" id="PR:P83556"/>
<dbReference type="Proteomes" id="UP000002494">
    <property type="component" value="Chromosome 1"/>
</dbReference>
<dbReference type="Bgee" id="ENSRNOG00000027843">
    <property type="expression patterns" value="Expressed in jejunum"/>
</dbReference>
<dbReference type="GO" id="GO:0005886">
    <property type="term" value="C:plasma membrane"/>
    <property type="evidence" value="ECO:0000318"/>
    <property type="project" value="GO_Central"/>
</dbReference>
<dbReference type="GO" id="GO:0060090">
    <property type="term" value="F:molecular adaptor activity"/>
    <property type="evidence" value="ECO:0000266"/>
    <property type="project" value="RGD"/>
</dbReference>
<dbReference type="GO" id="GO:0007166">
    <property type="term" value="P:cell surface receptor signaling pathway"/>
    <property type="evidence" value="ECO:0007669"/>
    <property type="project" value="UniProtKB-ARBA"/>
</dbReference>
<dbReference type="GO" id="GO:0002764">
    <property type="term" value="P:immune response-regulating signaling pathway"/>
    <property type="evidence" value="ECO:0000318"/>
    <property type="project" value="GO_Central"/>
</dbReference>
<dbReference type="GO" id="GO:0042267">
    <property type="term" value="P:natural killer cell mediated cytotoxicity"/>
    <property type="evidence" value="ECO:0000266"/>
    <property type="project" value="RGD"/>
</dbReference>
<dbReference type="CDD" id="cd05711">
    <property type="entry name" value="IgC2_D2_LILR_KIR_like"/>
    <property type="match status" value="2"/>
</dbReference>
<dbReference type="FunFam" id="2.60.40.10:FF:000049">
    <property type="entry name" value="Leukocyte immunoglobulin-like receptor subfamily B member 1"/>
    <property type="match status" value="3"/>
</dbReference>
<dbReference type="Gene3D" id="2.60.40.10">
    <property type="entry name" value="Immunoglobulins"/>
    <property type="match status" value="3"/>
</dbReference>
<dbReference type="InterPro" id="IPR007110">
    <property type="entry name" value="Ig-like_dom"/>
</dbReference>
<dbReference type="InterPro" id="IPR036179">
    <property type="entry name" value="Ig-like_dom_sf"/>
</dbReference>
<dbReference type="InterPro" id="IPR013783">
    <property type="entry name" value="Ig-like_fold"/>
</dbReference>
<dbReference type="InterPro" id="IPR050412">
    <property type="entry name" value="Ig-like_Receptors_ImmuneReg"/>
</dbReference>
<dbReference type="InterPro" id="IPR003599">
    <property type="entry name" value="Ig_sub"/>
</dbReference>
<dbReference type="InterPro" id="IPR003598">
    <property type="entry name" value="Ig_sub2"/>
</dbReference>
<dbReference type="InterPro" id="IPR013151">
    <property type="entry name" value="Immunoglobulin_dom"/>
</dbReference>
<dbReference type="PANTHER" id="PTHR11738:SF113">
    <property type="entry name" value="KILLER CELL IMMUNOGLOBULIN-LIKE RECEPTOR 2DL4"/>
    <property type="match status" value="1"/>
</dbReference>
<dbReference type="PANTHER" id="PTHR11738">
    <property type="entry name" value="MHC CLASS I NK CELL RECEPTOR"/>
    <property type="match status" value="1"/>
</dbReference>
<dbReference type="Pfam" id="PF00047">
    <property type="entry name" value="ig"/>
    <property type="match status" value="2"/>
</dbReference>
<dbReference type="SMART" id="SM00409">
    <property type="entry name" value="IG"/>
    <property type="match status" value="2"/>
</dbReference>
<dbReference type="SMART" id="SM00408">
    <property type="entry name" value="IGc2"/>
    <property type="match status" value="2"/>
</dbReference>
<dbReference type="SUPFAM" id="SSF48726">
    <property type="entry name" value="Immunoglobulin"/>
    <property type="match status" value="3"/>
</dbReference>
<dbReference type="PROSITE" id="PS50835">
    <property type="entry name" value="IG_LIKE"/>
    <property type="match status" value="1"/>
</dbReference>
<reference evidence="6" key="1">
    <citation type="journal article" date="2003" name="J. Immunol.">
        <title>Molecular cloning of a killer cell Ig-like receptor in the mouse and rat.</title>
        <authorList>
            <person name="Hoelsbrekken S.E."/>
            <person name="Nylenna O."/>
            <person name="Saether P.C."/>
            <person name="Slettedal I.O."/>
            <person name="Ryan J.C."/>
            <person name="Fossum S."/>
            <person name="Dissen E."/>
        </authorList>
    </citation>
    <scope>NUCLEOTIDE SEQUENCE [MRNA]</scope>
    <source>
        <strain>PVG</strain>
        <tissue>Natural killer cell</tissue>
    </source>
</reference>
<comment type="function">
    <text evidence="2 5">Receptor on natural killer (NK) cells. Inhibits the activity of NK cells thus preventing cell lysis.</text>
</comment>
<comment type="subcellular location">
    <subcellularLocation>
        <location>Cell membrane</location>
        <topology>Single-pass type I membrane protein</topology>
    </subcellularLocation>
</comment>
<comment type="similarity">
    <text evidence="6">Belongs to the immunoglobulin superfamily.</text>
</comment>
<name>KI3L1_RAT</name>
<organism evidence="7">
    <name type="scientific">Rattus norvegicus</name>
    <name type="common">Rat</name>
    <dbReference type="NCBI Taxonomy" id="10116"/>
    <lineage>
        <taxon>Eukaryota</taxon>
        <taxon>Metazoa</taxon>
        <taxon>Chordata</taxon>
        <taxon>Craniata</taxon>
        <taxon>Vertebrata</taxon>
        <taxon>Euteleostomi</taxon>
        <taxon>Mammalia</taxon>
        <taxon>Eutheria</taxon>
        <taxon>Euarchontoglires</taxon>
        <taxon>Glires</taxon>
        <taxon>Rodentia</taxon>
        <taxon>Myomorpha</taxon>
        <taxon>Muroidea</taxon>
        <taxon>Muridae</taxon>
        <taxon>Murinae</taxon>
        <taxon>Rattus</taxon>
    </lineage>
</organism>
<proteinExistence type="evidence at transcript level"/>
<evidence type="ECO:0000250" key="1"/>
<evidence type="ECO:0000250" key="2">
    <source>
        <dbReference type="UniProtKB" id="P43629"/>
    </source>
</evidence>
<evidence type="ECO:0000255" key="3"/>
<evidence type="ECO:0000255" key="4">
    <source>
        <dbReference type="PROSITE-ProRule" id="PRU00114"/>
    </source>
</evidence>
<evidence type="ECO:0000269" key="5">
    <source>
    </source>
</evidence>
<evidence type="ECO:0000305" key="6"/>
<evidence type="ECO:0000312" key="7">
    <source>
        <dbReference type="EMBL" id="AAO47865.1"/>
    </source>
</evidence>
<sequence length="422" mass="48074">MMFEFLSLLCSGFFLVQRMSAHMGSYDKPFLCASPSYIVPQGQNVTLICDSHSKPNIFKVYKEDGFPILQLHEKTFTKSLDIGPVTPEYAGTYRCFHHQYPNEISAHSEPLKIIISGIYMKPFLIAPQTPLANSGENVTLECHSEIMFDTYILTSHRMEILKETLQHFQESHFSGSYASFTIGPMTPDHSGTYTCYGAYNHSLYEWSDSSDPVDIKITGEYKKPSLSSVMSPVLVSEQNMTLSCISNHQFEMFHLSREGVPQGKGIPAMQSHSGKFEAKFLLSPVIQKGNYRCYGSFKNSSHVWSSPSDPLYLPAKDNLKNLHIQIGLLVTMVLVIVVIIIIIIIIIIIIYYYYFSKKSSILEQESEVKATINRQDPERQEEHKVTYIEFEQRIFNKNLMPPISQSPKEFSIDTVVYTEVMI</sequence>
<feature type="signal peptide" evidence="1">
    <location>
        <begin position="1"/>
        <end position="21"/>
    </location>
</feature>
<feature type="chain" id="PRO_0000015089" description="Killer cell immunoglobulin-like receptor 3DL1">
    <location>
        <begin position="22"/>
        <end position="422"/>
    </location>
</feature>
<feature type="topological domain" description="Extracellular" evidence="3">
    <location>
        <begin position="22"/>
        <end position="329"/>
    </location>
</feature>
<feature type="transmembrane region" description="Helical" evidence="3">
    <location>
        <begin position="330"/>
        <end position="350"/>
    </location>
</feature>
<feature type="topological domain" description="Cytoplasmic" evidence="3">
    <location>
        <begin position="351"/>
        <end position="422"/>
    </location>
</feature>
<feature type="domain" description="Ig-like C2-type 1">
    <location>
        <begin position="42"/>
        <end position="100"/>
    </location>
</feature>
<feature type="domain" description="Ig-like C2-type 2">
    <location>
        <begin position="135"/>
        <end position="202"/>
    </location>
</feature>
<feature type="domain" description="Ig-like C2-type 3">
    <location>
        <begin position="237"/>
        <end position="300"/>
    </location>
</feature>
<feature type="glycosylation site" description="N-linked (GlcNAc...) asparagine" evidence="3">
    <location>
        <position position="44"/>
    </location>
</feature>
<feature type="glycosylation site" description="N-linked (GlcNAc...) asparagine" evidence="3">
    <location>
        <position position="137"/>
    </location>
</feature>
<feature type="glycosylation site" description="N-linked (GlcNAc...) asparagine" evidence="3">
    <location>
        <position position="200"/>
    </location>
</feature>
<feature type="glycosylation site" description="N-linked (GlcNAc...) asparagine" evidence="3">
    <location>
        <position position="239"/>
    </location>
</feature>
<feature type="glycosylation site" description="N-linked (GlcNAc...) asparagine" evidence="3">
    <location>
        <position position="299"/>
    </location>
</feature>
<feature type="disulfide bond" evidence="4">
    <location>
        <begin position="49"/>
        <end position="95"/>
    </location>
</feature>
<feature type="disulfide bond" evidence="4">
    <location>
        <begin position="142"/>
        <end position="195"/>
    </location>
</feature>
<feature type="disulfide bond" evidence="4">
    <location>
        <begin position="244"/>
        <end position="293"/>
    </location>
</feature>
<keyword id="KW-1003">Cell membrane</keyword>
<keyword id="KW-1015">Disulfide bond</keyword>
<keyword id="KW-0325">Glycoprotein</keyword>
<keyword id="KW-0393">Immunoglobulin domain</keyword>
<keyword id="KW-0472">Membrane</keyword>
<keyword id="KW-0675">Receptor</keyword>
<keyword id="KW-1185">Reference proteome</keyword>
<keyword id="KW-0677">Repeat</keyword>
<keyword id="KW-0732">Signal</keyword>
<keyword id="KW-0812">Transmembrane</keyword>
<keyword id="KW-1133">Transmembrane helix</keyword>
<accession>P83556</accession>
<gene>
    <name type="primary">Kir3dl1</name>
</gene>